<sequence>MEPPQCVEELEDDVFQPEDGEPGTQPGSLLSADLFAQSQLDCPLSRLQLFPLTHCCGPGLRPVSQEDKATQTLSPASPSQGVMLPCGVTEEPQRLFYGNAGYRLPLPASFPAGSALGEQPPEGQFLQHRAEVQIARKLQCIADQFHRLHMQQHQQNRDRAWRQVFLFLQNLALNRRENREGVGPW</sequence>
<accession>Q8K589</accession>
<feature type="chain" id="PRO_0000143113" description="Bcl-2-modifying factor">
    <location>
        <begin position="1"/>
        <end position="185"/>
    </location>
</feature>
<feature type="region of interest" description="Disordered" evidence="2">
    <location>
        <begin position="1"/>
        <end position="28"/>
    </location>
</feature>
<feature type="region of interest" description="Interaction with DLC2">
    <location>
        <begin position="67"/>
        <end position="75"/>
    </location>
</feature>
<feature type="short sequence motif" description="BH3">
    <location>
        <begin position="134"/>
        <end position="148"/>
    </location>
</feature>
<feature type="compositionally biased region" description="Acidic residues" evidence="2">
    <location>
        <begin position="8"/>
        <end position="21"/>
    </location>
</feature>
<dbReference type="EMBL" id="AF506761">
    <property type="protein sequence ID" value="AAM28890.1"/>
    <property type="molecule type" value="mRNA"/>
</dbReference>
<dbReference type="RefSeq" id="NP_001388720.1">
    <property type="nucleotide sequence ID" value="NM_001401791.1"/>
</dbReference>
<dbReference type="RefSeq" id="NP_640351.1">
    <property type="nucleotide sequence ID" value="NM_139258.1"/>
</dbReference>
<dbReference type="SMR" id="Q8K589"/>
<dbReference type="FunCoup" id="Q8K589">
    <property type="interactions" value="240"/>
</dbReference>
<dbReference type="STRING" id="10116.ENSRNOP00000010381"/>
<dbReference type="PhosphoSitePlus" id="Q8K589"/>
<dbReference type="PaxDb" id="10116-ENSRNOP00000010381"/>
<dbReference type="GeneID" id="246142"/>
<dbReference type="KEGG" id="rno:246142"/>
<dbReference type="UCSC" id="RGD:628658">
    <property type="organism name" value="rat"/>
</dbReference>
<dbReference type="AGR" id="RGD:628658"/>
<dbReference type="CTD" id="90427"/>
<dbReference type="RGD" id="628658">
    <property type="gene designation" value="Bmf"/>
</dbReference>
<dbReference type="VEuPathDB" id="HostDB:ENSRNOG00000007529"/>
<dbReference type="eggNOG" id="ENOG502S0P3">
    <property type="taxonomic scope" value="Eukaryota"/>
</dbReference>
<dbReference type="HOGENOM" id="CLU_090680_0_0_1"/>
<dbReference type="InParanoid" id="Q8K589"/>
<dbReference type="PhylomeDB" id="Q8K589"/>
<dbReference type="Reactome" id="R-RNO-139910">
    <property type="pathway name" value="Activation of BMF and translocation to mitochondria"/>
</dbReference>
<dbReference type="PRO" id="PR:Q8K589"/>
<dbReference type="Proteomes" id="UP000002494">
    <property type="component" value="Chromosome 3"/>
</dbReference>
<dbReference type="Bgee" id="ENSRNOG00000007529">
    <property type="expression patterns" value="Expressed in thymus and 18 other cell types or tissues"/>
</dbReference>
<dbReference type="GO" id="GO:0001669">
    <property type="term" value="C:acrosomal vesicle"/>
    <property type="evidence" value="ECO:0000314"/>
    <property type="project" value="RGD"/>
</dbReference>
<dbReference type="GO" id="GO:0015629">
    <property type="term" value="C:actin cytoskeleton"/>
    <property type="evidence" value="ECO:0000266"/>
    <property type="project" value="RGD"/>
</dbReference>
<dbReference type="GO" id="GO:0005737">
    <property type="term" value="C:cytoplasm"/>
    <property type="evidence" value="ECO:0000266"/>
    <property type="project" value="RGD"/>
</dbReference>
<dbReference type="GO" id="GO:0016459">
    <property type="term" value="C:myosin complex"/>
    <property type="evidence" value="ECO:0000266"/>
    <property type="project" value="RGD"/>
</dbReference>
<dbReference type="GO" id="GO:0043276">
    <property type="term" value="P:anoikis"/>
    <property type="evidence" value="ECO:0000266"/>
    <property type="project" value="RGD"/>
</dbReference>
<dbReference type="GO" id="GO:0009267">
    <property type="term" value="P:cellular response to starvation"/>
    <property type="evidence" value="ECO:0000266"/>
    <property type="project" value="RGD"/>
</dbReference>
<dbReference type="GO" id="GO:0034644">
    <property type="term" value="P:cellular response to UV"/>
    <property type="evidence" value="ECO:0000266"/>
    <property type="project" value="RGD"/>
</dbReference>
<dbReference type="GO" id="GO:2001234">
    <property type="term" value="P:negative regulation of apoptotic signaling pathway"/>
    <property type="evidence" value="ECO:0000266"/>
    <property type="project" value="RGD"/>
</dbReference>
<dbReference type="GO" id="GO:1904093">
    <property type="term" value="P:negative regulation of autophagic cell death"/>
    <property type="evidence" value="ECO:0000266"/>
    <property type="project" value="RGD"/>
</dbReference>
<dbReference type="GO" id="GO:0010507">
    <property type="term" value="P:negative regulation of autophagy"/>
    <property type="evidence" value="ECO:0000266"/>
    <property type="project" value="RGD"/>
</dbReference>
<dbReference type="GO" id="GO:0043065">
    <property type="term" value="P:positive regulation of apoptotic process"/>
    <property type="evidence" value="ECO:0000266"/>
    <property type="project" value="RGD"/>
</dbReference>
<dbReference type="GO" id="GO:2001235">
    <property type="term" value="P:positive regulation of apoptotic signaling pathway"/>
    <property type="evidence" value="ECO:0000266"/>
    <property type="project" value="RGD"/>
</dbReference>
<dbReference type="GO" id="GO:0031334">
    <property type="term" value="P:positive regulation of protein-containing complex assembly"/>
    <property type="evidence" value="ECO:0000266"/>
    <property type="project" value="RGD"/>
</dbReference>
<dbReference type="GO" id="GO:0090200">
    <property type="term" value="P:positive regulation of release of cytochrome c from mitochondria"/>
    <property type="evidence" value="ECO:0000266"/>
    <property type="project" value="RGD"/>
</dbReference>
<dbReference type="InterPro" id="IPR028192">
    <property type="entry name" value="BMF"/>
</dbReference>
<dbReference type="PANTHER" id="PTHR32014">
    <property type="entry name" value="BCL-2-MODIFYING FACTOR"/>
    <property type="match status" value="1"/>
</dbReference>
<dbReference type="PANTHER" id="PTHR32014:SF2">
    <property type="entry name" value="BCL-2-MODIFYING FACTOR"/>
    <property type="match status" value="1"/>
</dbReference>
<dbReference type="Pfam" id="PF15185">
    <property type="entry name" value="BMF"/>
    <property type="match status" value="1"/>
</dbReference>
<reference key="1">
    <citation type="journal article" date="2003" name="J. Neurochem.">
        <title>Bcl-2-related protein family gene expression during oligodendroglial differentiation.</title>
        <authorList>
            <person name="Itoh T."/>
            <person name="Itoh A."/>
            <person name="Pleasure D."/>
        </authorList>
    </citation>
    <scope>NUCLEOTIDE SEQUENCE [MRNA]</scope>
    <source>
        <strain>Sprague-Dawley</strain>
    </source>
</reference>
<protein>
    <recommendedName>
        <fullName>Bcl-2-modifying factor</fullName>
    </recommendedName>
</protein>
<name>BMF_RAT</name>
<gene>
    <name type="primary">Bmf</name>
</gene>
<keyword id="KW-0053">Apoptosis</keyword>
<keyword id="KW-1185">Reference proteome</keyword>
<proteinExistence type="evidence at transcript level"/>
<comment type="function">
    <text>May play a role in apoptosis.</text>
</comment>
<comment type="subunit">
    <text evidence="1">Interacts with MCL1, BCL2, BCL2L1/BCL-Xl, BCL2A1 and BCL2L2/BCL-w. Interacts with the myosin V actin motor complex through its binding to DLC2 (By similarity).</text>
</comment>
<comment type="similarity">
    <text evidence="3">Belongs to the Bcl-2 family.</text>
</comment>
<evidence type="ECO:0000250" key="1"/>
<evidence type="ECO:0000256" key="2">
    <source>
        <dbReference type="SAM" id="MobiDB-lite"/>
    </source>
</evidence>
<evidence type="ECO:0000305" key="3"/>
<organism>
    <name type="scientific">Rattus norvegicus</name>
    <name type="common">Rat</name>
    <dbReference type="NCBI Taxonomy" id="10116"/>
    <lineage>
        <taxon>Eukaryota</taxon>
        <taxon>Metazoa</taxon>
        <taxon>Chordata</taxon>
        <taxon>Craniata</taxon>
        <taxon>Vertebrata</taxon>
        <taxon>Euteleostomi</taxon>
        <taxon>Mammalia</taxon>
        <taxon>Eutheria</taxon>
        <taxon>Euarchontoglires</taxon>
        <taxon>Glires</taxon>
        <taxon>Rodentia</taxon>
        <taxon>Myomorpha</taxon>
        <taxon>Muroidea</taxon>
        <taxon>Muridae</taxon>
        <taxon>Murinae</taxon>
        <taxon>Rattus</taxon>
    </lineage>
</organism>